<protein>
    <recommendedName>
        <fullName evidence="1">Elongation factor 4</fullName>
        <shortName evidence="1">EF-4</shortName>
        <ecNumber evidence="1">3.6.5.n1</ecNumber>
    </recommendedName>
    <alternativeName>
        <fullName evidence="1">Ribosomal back-translocase LepA</fullName>
    </alternativeName>
</protein>
<reference key="1">
    <citation type="journal article" date="2000" name="Nature">
        <title>Complete genome sequence of Pseudomonas aeruginosa PAO1, an opportunistic pathogen.</title>
        <authorList>
            <person name="Stover C.K."/>
            <person name="Pham X.-Q.T."/>
            <person name="Erwin A.L."/>
            <person name="Mizoguchi S.D."/>
            <person name="Warrener P."/>
            <person name="Hickey M.J."/>
            <person name="Brinkman F.S.L."/>
            <person name="Hufnagle W.O."/>
            <person name="Kowalik D.J."/>
            <person name="Lagrou M."/>
            <person name="Garber R.L."/>
            <person name="Goltry L."/>
            <person name="Tolentino E."/>
            <person name="Westbrock-Wadman S."/>
            <person name="Yuan Y."/>
            <person name="Brody L.L."/>
            <person name="Coulter S.N."/>
            <person name="Folger K.R."/>
            <person name="Kas A."/>
            <person name="Larbig K."/>
            <person name="Lim R.M."/>
            <person name="Smith K.A."/>
            <person name="Spencer D.H."/>
            <person name="Wong G.K.-S."/>
            <person name="Wu Z."/>
            <person name="Paulsen I.T."/>
            <person name="Reizer J."/>
            <person name="Saier M.H. Jr."/>
            <person name="Hancock R.E.W."/>
            <person name="Lory S."/>
            <person name="Olson M.V."/>
        </authorList>
    </citation>
    <scope>NUCLEOTIDE SEQUENCE [LARGE SCALE GENOMIC DNA]</scope>
    <source>
        <strain>ATCC 15692 / DSM 22644 / CIP 104116 / JCM 14847 / LMG 12228 / 1C / PRS 101 / PAO1</strain>
    </source>
</reference>
<comment type="function">
    <text evidence="1">Required for accurate and efficient protein synthesis under certain stress conditions. May act as a fidelity factor of the translation reaction, by catalyzing a one-codon backward translocation of tRNAs on improperly translocated ribosomes. Back-translocation proceeds from a post-translocation (POST) complex to a pre-translocation (PRE) complex, thus giving elongation factor G a second chance to translocate the tRNAs correctly. Binds to ribosomes in a GTP-dependent manner.</text>
</comment>
<comment type="catalytic activity">
    <reaction evidence="1">
        <text>GTP + H2O = GDP + phosphate + H(+)</text>
        <dbReference type="Rhea" id="RHEA:19669"/>
        <dbReference type="ChEBI" id="CHEBI:15377"/>
        <dbReference type="ChEBI" id="CHEBI:15378"/>
        <dbReference type="ChEBI" id="CHEBI:37565"/>
        <dbReference type="ChEBI" id="CHEBI:43474"/>
        <dbReference type="ChEBI" id="CHEBI:58189"/>
        <dbReference type="EC" id="3.6.5.n1"/>
    </reaction>
</comment>
<comment type="subcellular location">
    <subcellularLocation>
        <location evidence="1">Cell inner membrane</location>
        <topology evidence="1">Peripheral membrane protein</topology>
        <orientation evidence="1">Cytoplasmic side</orientation>
    </subcellularLocation>
</comment>
<comment type="similarity">
    <text evidence="1">Belongs to the TRAFAC class translation factor GTPase superfamily. Classic translation factor GTPase family. LepA subfamily.</text>
</comment>
<organism>
    <name type="scientific">Pseudomonas aeruginosa (strain ATCC 15692 / DSM 22644 / CIP 104116 / JCM 14847 / LMG 12228 / 1C / PRS 101 / PAO1)</name>
    <dbReference type="NCBI Taxonomy" id="208964"/>
    <lineage>
        <taxon>Bacteria</taxon>
        <taxon>Pseudomonadati</taxon>
        <taxon>Pseudomonadota</taxon>
        <taxon>Gammaproteobacteria</taxon>
        <taxon>Pseudomonadales</taxon>
        <taxon>Pseudomonadaceae</taxon>
        <taxon>Pseudomonas</taxon>
    </lineage>
</organism>
<accession>Q9I5G8</accession>
<feature type="chain" id="PRO_0000176323" description="Elongation factor 4">
    <location>
        <begin position="1"/>
        <end position="599"/>
    </location>
</feature>
<feature type="domain" description="tr-type G">
    <location>
        <begin position="5"/>
        <end position="187"/>
    </location>
</feature>
<feature type="binding site" evidence="1">
    <location>
        <begin position="17"/>
        <end position="22"/>
    </location>
    <ligand>
        <name>GTP</name>
        <dbReference type="ChEBI" id="CHEBI:37565"/>
    </ligand>
</feature>
<feature type="binding site" evidence="1">
    <location>
        <begin position="134"/>
        <end position="137"/>
    </location>
    <ligand>
        <name>GTP</name>
        <dbReference type="ChEBI" id="CHEBI:37565"/>
    </ligand>
</feature>
<name>LEPA_PSEAE</name>
<dbReference type="EC" id="3.6.5.n1" evidence="1"/>
<dbReference type="EMBL" id="AE004091">
    <property type="protein sequence ID" value="AAG04156.1"/>
    <property type="molecule type" value="Genomic_DNA"/>
</dbReference>
<dbReference type="PIR" id="G83550">
    <property type="entry name" value="G83550"/>
</dbReference>
<dbReference type="RefSeq" id="NP_249458.1">
    <property type="nucleotide sequence ID" value="NC_002516.2"/>
</dbReference>
<dbReference type="RefSeq" id="WP_003085555.1">
    <property type="nucleotide sequence ID" value="NZ_QZGE01000007.1"/>
</dbReference>
<dbReference type="SMR" id="Q9I5G8"/>
<dbReference type="FunCoup" id="Q9I5G8">
    <property type="interactions" value="736"/>
</dbReference>
<dbReference type="STRING" id="208964.PA0767"/>
<dbReference type="PaxDb" id="208964-PA0767"/>
<dbReference type="GeneID" id="881998"/>
<dbReference type="KEGG" id="pae:PA0767"/>
<dbReference type="PATRIC" id="fig|208964.12.peg.797"/>
<dbReference type="PseudoCAP" id="PA0767"/>
<dbReference type="HOGENOM" id="CLU_009995_3_3_6"/>
<dbReference type="InParanoid" id="Q9I5G8"/>
<dbReference type="OrthoDB" id="9801472at2"/>
<dbReference type="PhylomeDB" id="Q9I5G8"/>
<dbReference type="BioCyc" id="PAER208964:G1FZ6-780-MONOMER"/>
<dbReference type="Proteomes" id="UP000002438">
    <property type="component" value="Chromosome"/>
</dbReference>
<dbReference type="GO" id="GO:0005886">
    <property type="term" value="C:plasma membrane"/>
    <property type="evidence" value="ECO:0007669"/>
    <property type="project" value="UniProtKB-SubCell"/>
</dbReference>
<dbReference type="GO" id="GO:0005525">
    <property type="term" value="F:GTP binding"/>
    <property type="evidence" value="ECO:0007669"/>
    <property type="project" value="UniProtKB-UniRule"/>
</dbReference>
<dbReference type="GO" id="GO:0003924">
    <property type="term" value="F:GTPase activity"/>
    <property type="evidence" value="ECO:0007669"/>
    <property type="project" value="UniProtKB-UniRule"/>
</dbReference>
<dbReference type="GO" id="GO:0097216">
    <property type="term" value="F:guanosine tetraphosphate binding"/>
    <property type="evidence" value="ECO:0007669"/>
    <property type="project" value="UniProtKB-ARBA"/>
</dbReference>
<dbReference type="GO" id="GO:0043022">
    <property type="term" value="F:ribosome binding"/>
    <property type="evidence" value="ECO:0000318"/>
    <property type="project" value="GO_Central"/>
</dbReference>
<dbReference type="GO" id="GO:0003746">
    <property type="term" value="F:translation elongation factor activity"/>
    <property type="evidence" value="ECO:0007669"/>
    <property type="project" value="UniProtKB-UniRule"/>
</dbReference>
<dbReference type="GO" id="GO:0045727">
    <property type="term" value="P:positive regulation of translation"/>
    <property type="evidence" value="ECO:0000318"/>
    <property type="project" value="GO_Central"/>
</dbReference>
<dbReference type="CDD" id="cd03699">
    <property type="entry name" value="EF4_II"/>
    <property type="match status" value="1"/>
</dbReference>
<dbReference type="CDD" id="cd16260">
    <property type="entry name" value="EF4_III"/>
    <property type="match status" value="1"/>
</dbReference>
<dbReference type="CDD" id="cd01890">
    <property type="entry name" value="LepA"/>
    <property type="match status" value="1"/>
</dbReference>
<dbReference type="CDD" id="cd03709">
    <property type="entry name" value="lepA_C"/>
    <property type="match status" value="1"/>
</dbReference>
<dbReference type="FunFam" id="3.40.50.300:FF:000078">
    <property type="entry name" value="Elongation factor 4"/>
    <property type="match status" value="1"/>
</dbReference>
<dbReference type="FunFam" id="2.40.30.10:FF:000015">
    <property type="entry name" value="Translation factor GUF1, mitochondrial"/>
    <property type="match status" value="1"/>
</dbReference>
<dbReference type="FunFam" id="3.30.70.240:FF:000007">
    <property type="entry name" value="Translation factor GUF1, mitochondrial"/>
    <property type="match status" value="1"/>
</dbReference>
<dbReference type="FunFam" id="3.30.70.2570:FF:000001">
    <property type="entry name" value="Translation factor GUF1, mitochondrial"/>
    <property type="match status" value="1"/>
</dbReference>
<dbReference type="FunFam" id="3.30.70.870:FF:000004">
    <property type="entry name" value="Translation factor GUF1, mitochondrial"/>
    <property type="match status" value="1"/>
</dbReference>
<dbReference type="Gene3D" id="3.30.70.240">
    <property type="match status" value="1"/>
</dbReference>
<dbReference type="Gene3D" id="3.30.70.2570">
    <property type="entry name" value="Elongation factor 4, C-terminal domain"/>
    <property type="match status" value="1"/>
</dbReference>
<dbReference type="Gene3D" id="3.30.70.870">
    <property type="entry name" value="Elongation Factor G (Translational Gtpase), domain 3"/>
    <property type="match status" value="1"/>
</dbReference>
<dbReference type="Gene3D" id="3.40.50.300">
    <property type="entry name" value="P-loop containing nucleotide triphosphate hydrolases"/>
    <property type="match status" value="1"/>
</dbReference>
<dbReference type="Gene3D" id="2.40.30.10">
    <property type="entry name" value="Translation factors"/>
    <property type="match status" value="1"/>
</dbReference>
<dbReference type="HAMAP" id="MF_00071">
    <property type="entry name" value="LepA"/>
    <property type="match status" value="1"/>
</dbReference>
<dbReference type="InterPro" id="IPR006297">
    <property type="entry name" value="EF-4"/>
</dbReference>
<dbReference type="InterPro" id="IPR035647">
    <property type="entry name" value="EFG_III/V"/>
</dbReference>
<dbReference type="InterPro" id="IPR000640">
    <property type="entry name" value="EFG_V-like"/>
</dbReference>
<dbReference type="InterPro" id="IPR004161">
    <property type="entry name" value="EFTu-like_2"/>
</dbReference>
<dbReference type="InterPro" id="IPR038363">
    <property type="entry name" value="LepA_C_sf"/>
</dbReference>
<dbReference type="InterPro" id="IPR013842">
    <property type="entry name" value="LepA_CTD"/>
</dbReference>
<dbReference type="InterPro" id="IPR035654">
    <property type="entry name" value="LepA_IV"/>
</dbReference>
<dbReference type="InterPro" id="IPR027417">
    <property type="entry name" value="P-loop_NTPase"/>
</dbReference>
<dbReference type="InterPro" id="IPR005225">
    <property type="entry name" value="Small_GTP-bd"/>
</dbReference>
<dbReference type="InterPro" id="IPR000795">
    <property type="entry name" value="T_Tr_GTP-bd_dom"/>
</dbReference>
<dbReference type="NCBIfam" id="TIGR01393">
    <property type="entry name" value="lepA"/>
    <property type="match status" value="1"/>
</dbReference>
<dbReference type="NCBIfam" id="TIGR00231">
    <property type="entry name" value="small_GTP"/>
    <property type="match status" value="1"/>
</dbReference>
<dbReference type="PANTHER" id="PTHR43512:SF4">
    <property type="entry name" value="TRANSLATION FACTOR GUF1 HOMOLOG, CHLOROPLASTIC"/>
    <property type="match status" value="1"/>
</dbReference>
<dbReference type="PANTHER" id="PTHR43512">
    <property type="entry name" value="TRANSLATION FACTOR GUF1-RELATED"/>
    <property type="match status" value="1"/>
</dbReference>
<dbReference type="Pfam" id="PF00679">
    <property type="entry name" value="EFG_C"/>
    <property type="match status" value="1"/>
</dbReference>
<dbReference type="Pfam" id="PF00009">
    <property type="entry name" value="GTP_EFTU"/>
    <property type="match status" value="1"/>
</dbReference>
<dbReference type="Pfam" id="PF03144">
    <property type="entry name" value="GTP_EFTU_D2"/>
    <property type="match status" value="1"/>
</dbReference>
<dbReference type="Pfam" id="PF06421">
    <property type="entry name" value="LepA_C"/>
    <property type="match status" value="1"/>
</dbReference>
<dbReference type="PRINTS" id="PR00315">
    <property type="entry name" value="ELONGATNFCT"/>
</dbReference>
<dbReference type="SUPFAM" id="SSF54980">
    <property type="entry name" value="EF-G C-terminal domain-like"/>
    <property type="match status" value="2"/>
</dbReference>
<dbReference type="SUPFAM" id="SSF52540">
    <property type="entry name" value="P-loop containing nucleoside triphosphate hydrolases"/>
    <property type="match status" value="1"/>
</dbReference>
<dbReference type="PROSITE" id="PS51722">
    <property type="entry name" value="G_TR_2"/>
    <property type="match status" value="1"/>
</dbReference>
<keyword id="KW-0997">Cell inner membrane</keyword>
<keyword id="KW-1003">Cell membrane</keyword>
<keyword id="KW-0342">GTP-binding</keyword>
<keyword id="KW-0378">Hydrolase</keyword>
<keyword id="KW-0472">Membrane</keyword>
<keyword id="KW-0547">Nucleotide-binding</keyword>
<keyword id="KW-0648">Protein biosynthesis</keyword>
<keyword id="KW-1185">Reference proteome</keyword>
<evidence type="ECO:0000255" key="1">
    <source>
        <dbReference type="HAMAP-Rule" id="MF_00071"/>
    </source>
</evidence>
<proteinExistence type="inferred from homology"/>
<sequence length="599" mass="66295">MSDLSHIRNFSIIAHIDHGKSTLADRFIQMCGGLSDREMEAQVLDSMDLERERGITIKAHSVTLHYKAQDGKTYQLNFIDTPGHVDFTYEVSRSLAACEGALLVVDAGQGVEAQSVANCYTAIEQGLEVMPVLNKMDLPQAEPERVKEEIESIIGIDATDAVACSAKSGMGVLEVLERLVTAIPAPEGEIEAPLQALIIDSWFDNYLGVVSLVRVKNGRVKKGDKILVKSTGKVHQVDSVGVFTPKHTETVDLKAGEVGFIIAGIKDIHGAPVGDTLTLNNTPDVEVLPGFKRVKPQVYAGLFPVSSDDFEDFRDALQKLTLNDSSLQYEPESSEALGFGFRCGFLGMLHMEIIQERLEREYDLDLITTAPTVVFEIVQKNGEIIYVDNPSKLPDLASIQEMREPICRATILVPKDHLGNVITLCIEKRGVQRDMHFLSGQVQVVYDLPMNEVVLDFFDRLKSTSRGYASLDYSFDRFEPSNLVRLDVLINGEKVDALALIVHRDNAPYKGRQLVEKMKELIPRQMFDVAIQAAIGGQIIARSTVKALRKNVLAKCYGGDVSRKRKLLEKQKAGKKRMKQVGSVEIPQEAFLAVLKVDS</sequence>
<gene>
    <name evidence="1" type="primary">lepA</name>
    <name type="synonym">le</name>
    <name type="ordered locus">PA0767</name>
</gene>